<protein>
    <recommendedName>
        <fullName>Zinc-type alcohol dehydrogenase-like protein C1198.01</fullName>
        <ecNumber>1.-.-.-</ecNumber>
    </recommendedName>
</protein>
<feature type="chain" id="PRO_0000358878" description="Zinc-type alcohol dehydrogenase-like protein C1198.01">
    <location>
        <begin position="1"/>
        <end position="423"/>
    </location>
</feature>
<feature type="region of interest" description="Disordered" evidence="2">
    <location>
        <begin position="14"/>
        <end position="36"/>
    </location>
</feature>
<feature type="binding site" evidence="1">
    <location>
        <position position="74"/>
    </location>
    <ligand>
        <name>Zn(2+)</name>
        <dbReference type="ChEBI" id="CHEBI:29105"/>
        <label>1</label>
        <note>catalytic</note>
    </ligand>
</feature>
<feature type="binding site" evidence="1">
    <location>
        <position position="97"/>
    </location>
    <ligand>
        <name>Zn(2+)</name>
        <dbReference type="ChEBI" id="CHEBI:29105"/>
        <label>1</label>
        <note>catalytic</note>
    </ligand>
</feature>
<feature type="binding site" evidence="1">
    <location>
        <position position="127"/>
    </location>
    <ligand>
        <name>Zn(2+)</name>
        <dbReference type="ChEBI" id="CHEBI:29105"/>
        <label>2</label>
    </ligand>
</feature>
<feature type="binding site" evidence="1">
    <location>
        <position position="130"/>
    </location>
    <ligand>
        <name>Zn(2+)</name>
        <dbReference type="ChEBI" id="CHEBI:29105"/>
        <label>2</label>
    </ligand>
</feature>
<feature type="binding site" evidence="1">
    <location>
        <position position="133"/>
    </location>
    <ligand>
        <name>Zn(2+)</name>
        <dbReference type="ChEBI" id="CHEBI:29105"/>
        <label>2</label>
    </ligand>
</feature>
<feature type="binding site" evidence="1">
    <location>
        <position position="141"/>
    </location>
    <ligand>
        <name>Zn(2+)</name>
        <dbReference type="ChEBI" id="CHEBI:29105"/>
        <label>2</label>
    </ligand>
</feature>
<dbReference type="EC" id="1.-.-.-"/>
<dbReference type="EMBL" id="CU329671">
    <property type="protein sequence ID" value="CAB91176.1"/>
    <property type="molecule type" value="Genomic_DNA"/>
</dbReference>
<dbReference type="SMR" id="Q9P6I8"/>
<dbReference type="BioGRID" id="276597">
    <property type="interactions" value="13"/>
</dbReference>
<dbReference type="STRING" id="284812.Q9P6I8"/>
<dbReference type="PaxDb" id="4896-SPBC1198.01.1"/>
<dbReference type="EnsemblFungi" id="SPBC1198.01.1">
    <property type="protein sequence ID" value="SPBC1198.01.1:pep"/>
    <property type="gene ID" value="SPBC1198.01"/>
</dbReference>
<dbReference type="KEGG" id="spo:2540059"/>
<dbReference type="PomBase" id="SPBC1198.01"/>
<dbReference type="VEuPathDB" id="FungiDB:SPBC1198.01"/>
<dbReference type="eggNOG" id="KOG0024">
    <property type="taxonomic scope" value="Eukaryota"/>
</dbReference>
<dbReference type="HOGENOM" id="CLU_026673_11_3_1"/>
<dbReference type="InParanoid" id="Q9P6I8"/>
<dbReference type="OMA" id="PHVKNTH"/>
<dbReference type="PhylomeDB" id="Q9P6I8"/>
<dbReference type="PRO" id="PR:Q9P6I8"/>
<dbReference type="Proteomes" id="UP000002485">
    <property type="component" value="Chromosome II"/>
</dbReference>
<dbReference type="GO" id="GO:0005794">
    <property type="term" value="C:Golgi apparatus"/>
    <property type="evidence" value="ECO:0007005"/>
    <property type="project" value="PomBase"/>
</dbReference>
<dbReference type="GO" id="GO:0016491">
    <property type="term" value="F:oxidoreductase activity"/>
    <property type="evidence" value="ECO:0007669"/>
    <property type="project" value="UniProtKB-KW"/>
</dbReference>
<dbReference type="GO" id="GO:0008270">
    <property type="term" value="F:zinc ion binding"/>
    <property type="evidence" value="ECO:0007669"/>
    <property type="project" value="InterPro"/>
</dbReference>
<dbReference type="GO" id="GO:0070458">
    <property type="term" value="P:cellular detoxification of nitrogen compound"/>
    <property type="evidence" value="ECO:0000316"/>
    <property type="project" value="PomBase"/>
</dbReference>
<dbReference type="GO" id="GO:0071500">
    <property type="term" value="P:cellular response to nitrosative stress"/>
    <property type="evidence" value="ECO:0000316"/>
    <property type="project" value="PomBase"/>
</dbReference>
<dbReference type="CDD" id="cd08283">
    <property type="entry name" value="FDH_like_1"/>
    <property type="match status" value="1"/>
</dbReference>
<dbReference type="Gene3D" id="3.90.180.10">
    <property type="entry name" value="Medium-chain alcohol dehydrogenases, catalytic domain"/>
    <property type="match status" value="1"/>
</dbReference>
<dbReference type="Gene3D" id="3.40.50.720">
    <property type="entry name" value="NAD(P)-binding Rossmann-like Domain"/>
    <property type="match status" value="1"/>
</dbReference>
<dbReference type="InterPro" id="IPR013149">
    <property type="entry name" value="ADH-like_C"/>
</dbReference>
<dbReference type="InterPro" id="IPR013154">
    <property type="entry name" value="ADH-like_N"/>
</dbReference>
<dbReference type="InterPro" id="IPR002328">
    <property type="entry name" value="ADH_Zn_CS"/>
</dbReference>
<dbReference type="InterPro" id="IPR011032">
    <property type="entry name" value="GroES-like_sf"/>
</dbReference>
<dbReference type="InterPro" id="IPR036291">
    <property type="entry name" value="NAD(P)-bd_dom_sf"/>
</dbReference>
<dbReference type="PANTHER" id="PTHR42813:SF1">
    <property type="entry name" value="DEHYDROGENASE, PUTATIVE (AFU_ORTHOLOGUE AFUA_5G03930)-RELATED"/>
    <property type="match status" value="1"/>
</dbReference>
<dbReference type="PANTHER" id="PTHR42813">
    <property type="entry name" value="ZINC-TYPE ALCOHOL DEHYDROGENASE-LIKE"/>
    <property type="match status" value="1"/>
</dbReference>
<dbReference type="Pfam" id="PF08240">
    <property type="entry name" value="ADH_N"/>
    <property type="match status" value="1"/>
</dbReference>
<dbReference type="Pfam" id="PF00107">
    <property type="entry name" value="ADH_zinc_N"/>
    <property type="match status" value="1"/>
</dbReference>
<dbReference type="SUPFAM" id="SSF50129">
    <property type="entry name" value="GroES-like"/>
    <property type="match status" value="1"/>
</dbReference>
<dbReference type="SUPFAM" id="SSF51735">
    <property type="entry name" value="NAD(P)-binding Rossmann-fold domains"/>
    <property type="match status" value="1"/>
</dbReference>
<dbReference type="PROSITE" id="PS00059">
    <property type="entry name" value="ADH_ZINC"/>
    <property type="match status" value="1"/>
</dbReference>
<sequence length="423" mass="46442">MEYLTNLKTNIMDKQLGHREVSEGSTQPKPDPSGATMKACVWDGPLNVKIAEVPKPTITHPKDVIVKTTACTICSGSDSHIFSGEMPGIEKGAILGHESCGIVAEKGDEVNNLEIGDRVVIAFDLACGQCSFCKRHEYAACDTTNDSKLMDVNYGSHHSAIFGYTKLLGDVPGCQAEYIRVPFAEINCCKLPDDIPDSEGLFMSDVLCTSLHACTLGEVKKGDTVAIWGMGPIGLYAGRWAQILGASKVIGIEVVPERIELARQKFGFTVIDRNEVSDVPKKIMELVSNGVDCAIEASGFRFSTSILHKVERAVGLETDSPDMITECLNAVRKYGHVSIIADYVGTSNQFPIGHVVMKHLTIRSGQCPCQNYFGYVIDNIRSGKIDPRWMVTNKIKFDDLPDAYNKLFYKEDGYVKVYCDMTE</sequence>
<organism>
    <name type="scientific">Schizosaccharomyces pombe (strain 972 / ATCC 24843)</name>
    <name type="common">Fission yeast</name>
    <dbReference type="NCBI Taxonomy" id="284812"/>
    <lineage>
        <taxon>Eukaryota</taxon>
        <taxon>Fungi</taxon>
        <taxon>Dikarya</taxon>
        <taxon>Ascomycota</taxon>
        <taxon>Taphrinomycotina</taxon>
        <taxon>Schizosaccharomycetes</taxon>
        <taxon>Schizosaccharomycetales</taxon>
        <taxon>Schizosaccharomycetaceae</taxon>
        <taxon>Schizosaccharomyces</taxon>
    </lineage>
</organism>
<proteinExistence type="inferred from homology"/>
<comment type="cofactor">
    <cofactor evidence="1">
        <name>Zn(2+)</name>
        <dbReference type="ChEBI" id="CHEBI:29105"/>
    </cofactor>
    <text evidence="1">Binds 2 Zn(2+) ions per subunit.</text>
</comment>
<comment type="subcellular location">
    <subcellularLocation>
        <location evidence="3">Golgi apparatus</location>
    </subcellularLocation>
</comment>
<comment type="similarity">
    <text evidence="4">Belongs to the zinc-containing alcohol dehydrogenase family. Class-III subfamily.</text>
</comment>
<accession>Q9P6I8</accession>
<name>YHG1_SCHPO</name>
<gene>
    <name type="ORF">SPBC1198.01</name>
</gene>
<evidence type="ECO:0000250" key="1"/>
<evidence type="ECO:0000256" key="2">
    <source>
        <dbReference type="SAM" id="MobiDB-lite"/>
    </source>
</evidence>
<evidence type="ECO:0000269" key="3">
    <source>
    </source>
</evidence>
<evidence type="ECO:0000305" key="4"/>
<keyword id="KW-0333">Golgi apparatus</keyword>
<keyword id="KW-0479">Metal-binding</keyword>
<keyword id="KW-0520">NAD</keyword>
<keyword id="KW-0521">NADP</keyword>
<keyword id="KW-0560">Oxidoreductase</keyword>
<keyword id="KW-1185">Reference proteome</keyword>
<keyword id="KW-0862">Zinc</keyword>
<reference key="1">
    <citation type="journal article" date="2002" name="Nature">
        <title>The genome sequence of Schizosaccharomyces pombe.</title>
        <authorList>
            <person name="Wood V."/>
            <person name="Gwilliam R."/>
            <person name="Rajandream M.A."/>
            <person name="Lyne M.H."/>
            <person name="Lyne R."/>
            <person name="Stewart A."/>
            <person name="Sgouros J.G."/>
            <person name="Peat N."/>
            <person name="Hayles J."/>
            <person name="Baker S.G."/>
            <person name="Basham D."/>
            <person name="Bowman S."/>
            <person name="Brooks K."/>
            <person name="Brown D."/>
            <person name="Brown S."/>
            <person name="Chillingworth T."/>
            <person name="Churcher C.M."/>
            <person name="Collins M."/>
            <person name="Connor R."/>
            <person name="Cronin A."/>
            <person name="Davis P."/>
            <person name="Feltwell T."/>
            <person name="Fraser A."/>
            <person name="Gentles S."/>
            <person name="Goble A."/>
            <person name="Hamlin N."/>
            <person name="Harris D.E."/>
            <person name="Hidalgo J."/>
            <person name="Hodgson G."/>
            <person name="Holroyd S."/>
            <person name="Hornsby T."/>
            <person name="Howarth S."/>
            <person name="Huckle E.J."/>
            <person name="Hunt S."/>
            <person name="Jagels K."/>
            <person name="James K.D."/>
            <person name="Jones L."/>
            <person name="Jones M."/>
            <person name="Leather S."/>
            <person name="McDonald S."/>
            <person name="McLean J."/>
            <person name="Mooney P."/>
            <person name="Moule S."/>
            <person name="Mungall K.L."/>
            <person name="Murphy L.D."/>
            <person name="Niblett D."/>
            <person name="Odell C."/>
            <person name="Oliver K."/>
            <person name="O'Neil S."/>
            <person name="Pearson D."/>
            <person name="Quail M.A."/>
            <person name="Rabbinowitsch E."/>
            <person name="Rutherford K.M."/>
            <person name="Rutter S."/>
            <person name="Saunders D."/>
            <person name="Seeger K."/>
            <person name="Sharp S."/>
            <person name="Skelton J."/>
            <person name="Simmonds M.N."/>
            <person name="Squares R."/>
            <person name="Squares S."/>
            <person name="Stevens K."/>
            <person name="Taylor K."/>
            <person name="Taylor R.G."/>
            <person name="Tivey A."/>
            <person name="Walsh S.V."/>
            <person name="Warren T."/>
            <person name="Whitehead S."/>
            <person name="Woodward J.R."/>
            <person name="Volckaert G."/>
            <person name="Aert R."/>
            <person name="Robben J."/>
            <person name="Grymonprez B."/>
            <person name="Weltjens I."/>
            <person name="Vanstreels E."/>
            <person name="Rieger M."/>
            <person name="Schaefer M."/>
            <person name="Mueller-Auer S."/>
            <person name="Gabel C."/>
            <person name="Fuchs M."/>
            <person name="Duesterhoeft A."/>
            <person name="Fritzc C."/>
            <person name="Holzer E."/>
            <person name="Moestl D."/>
            <person name="Hilbert H."/>
            <person name="Borzym K."/>
            <person name="Langer I."/>
            <person name="Beck A."/>
            <person name="Lehrach H."/>
            <person name="Reinhardt R."/>
            <person name="Pohl T.M."/>
            <person name="Eger P."/>
            <person name="Zimmermann W."/>
            <person name="Wedler H."/>
            <person name="Wambutt R."/>
            <person name="Purnelle B."/>
            <person name="Goffeau A."/>
            <person name="Cadieu E."/>
            <person name="Dreano S."/>
            <person name="Gloux S."/>
            <person name="Lelaure V."/>
            <person name="Mottier S."/>
            <person name="Galibert F."/>
            <person name="Aves S.J."/>
            <person name="Xiang Z."/>
            <person name="Hunt C."/>
            <person name="Moore K."/>
            <person name="Hurst S.M."/>
            <person name="Lucas M."/>
            <person name="Rochet M."/>
            <person name="Gaillardin C."/>
            <person name="Tallada V.A."/>
            <person name="Garzon A."/>
            <person name="Thode G."/>
            <person name="Daga R.R."/>
            <person name="Cruzado L."/>
            <person name="Jimenez J."/>
            <person name="Sanchez M."/>
            <person name="del Rey F."/>
            <person name="Benito J."/>
            <person name="Dominguez A."/>
            <person name="Revuelta J.L."/>
            <person name="Moreno S."/>
            <person name="Armstrong J."/>
            <person name="Forsburg S.L."/>
            <person name="Cerutti L."/>
            <person name="Lowe T."/>
            <person name="McCombie W.R."/>
            <person name="Paulsen I."/>
            <person name="Potashkin J."/>
            <person name="Shpakovski G.V."/>
            <person name="Ussery D."/>
            <person name="Barrell B.G."/>
            <person name="Nurse P."/>
        </authorList>
    </citation>
    <scope>NUCLEOTIDE SEQUENCE [LARGE SCALE GENOMIC DNA]</scope>
    <source>
        <strain>972 / ATCC 24843</strain>
    </source>
</reference>
<reference key="2">
    <citation type="journal article" date="2006" name="Nat. Biotechnol.">
        <title>ORFeome cloning and global analysis of protein localization in the fission yeast Schizosaccharomyces pombe.</title>
        <authorList>
            <person name="Matsuyama A."/>
            <person name="Arai R."/>
            <person name="Yashiroda Y."/>
            <person name="Shirai A."/>
            <person name="Kamata A."/>
            <person name="Sekido S."/>
            <person name="Kobayashi Y."/>
            <person name="Hashimoto A."/>
            <person name="Hamamoto M."/>
            <person name="Hiraoka Y."/>
            <person name="Horinouchi S."/>
            <person name="Yoshida M."/>
        </authorList>
    </citation>
    <scope>SUBCELLULAR LOCATION [LARGE SCALE ANALYSIS]</scope>
</reference>